<name>RL14_SHESH</name>
<protein>
    <recommendedName>
        <fullName evidence="1">Large ribosomal subunit protein uL14</fullName>
    </recommendedName>
    <alternativeName>
        <fullName evidence="2">50S ribosomal protein L14</fullName>
    </alternativeName>
</protein>
<feature type="chain" id="PRO_1000087149" description="Large ribosomal subunit protein uL14">
    <location>
        <begin position="1"/>
        <end position="122"/>
    </location>
</feature>
<proteinExistence type="inferred from homology"/>
<gene>
    <name evidence="1" type="primary">rplN</name>
    <name type="ordered locus">Ssed_4307</name>
</gene>
<reference key="1">
    <citation type="submission" date="2007-08" db="EMBL/GenBank/DDBJ databases">
        <title>Complete sequence of Shewanella sediminis HAW-EB3.</title>
        <authorList>
            <consortium name="US DOE Joint Genome Institute"/>
            <person name="Copeland A."/>
            <person name="Lucas S."/>
            <person name="Lapidus A."/>
            <person name="Barry K."/>
            <person name="Glavina del Rio T."/>
            <person name="Dalin E."/>
            <person name="Tice H."/>
            <person name="Pitluck S."/>
            <person name="Chertkov O."/>
            <person name="Brettin T."/>
            <person name="Bruce D."/>
            <person name="Detter J.C."/>
            <person name="Han C."/>
            <person name="Schmutz J."/>
            <person name="Larimer F."/>
            <person name="Land M."/>
            <person name="Hauser L."/>
            <person name="Kyrpides N."/>
            <person name="Kim E."/>
            <person name="Zhao J.-S."/>
            <person name="Richardson P."/>
        </authorList>
    </citation>
    <scope>NUCLEOTIDE SEQUENCE [LARGE SCALE GENOMIC DNA]</scope>
    <source>
        <strain>HAW-EB3</strain>
    </source>
</reference>
<dbReference type="EMBL" id="CP000821">
    <property type="protein sequence ID" value="ABV38911.1"/>
    <property type="molecule type" value="Genomic_DNA"/>
</dbReference>
<dbReference type="RefSeq" id="WP_012144640.1">
    <property type="nucleotide sequence ID" value="NC_009831.1"/>
</dbReference>
<dbReference type="SMR" id="A8G1D8"/>
<dbReference type="STRING" id="425104.Ssed_4307"/>
<dbReference type="KEGG" id="sse:Ssed_4307"/>
<dbReference type="eggNOG" id="COG0093">
    <property type="taxonomic scope" value="Bacteria"/>
</dbReference>
<dbReference type="HOGENOM" id="CLU_095071_2_1_6"/>
<dbReference type="OrthoDB" id="9806379at2"/>
<dbReference type="Proteomes" id="UP000002015">
    <property type="component" value="Chromosome"/>
</dbReference>
<dbReference type="GO" id="GO:0022625">
    <property type="term" value="C:cytosolic large ribosomal subunit"/>
    <property type="evidence" value="ECO:0007669"/>
    <property type="project" value="TreeGrafter"/>
</dbReference>
<dbReference type="GO" id="GO:0070180">
    <property type="term" value="F:large ribosomal subunit rRNA binding"/>
    <property type="evidence" value="ECO:0007669"/>
    <property type="project" value="TreeGrafter"/>
</dbReference>
<dbReference type="GO" id="GO:0003735">
    <property type="term" value="F:structural constituent of ribosome"/>
    <property type="evidence" value="ECO:0007669"/>
    <property type="project" value="InterPro"/>
</dbReference>
<dbReference type="GO" id="GO:0006412">
    <property type="term" value="P:translation"/>
    <property type="evidence" value="ECO:0007669"/>
    <property type="project" value="UniProtKB-UniRule"/>
</dbReference>
<dbReference type="CDD" id="cd00337">
    <property type="entry name" value="Ribosomal_uL14"/>
    <property type="match status" value="1"/>
</dbReference>
<dbReference type="FunFam" id="2.40.150.20:FF:000001">
    <property type="entry name" value="50S ribosomal protein L14"/>
    <property type="match status" value="1"/>
</dbReference>
<dbReference type="Gene3D" id="2.40.150.20">
    <property type="entry name" value="Ribosomal protein L14"/>
    <property type="match status" value="1"/>
</dbReference>
<dbReference type="HAMAP" id="MF_01367">
    <property type="entry name" value="Ribosomal_uL14"/>
    <property type="match status" value="1"/>
</dbReference>
<dbReference type="InterPro" id="IPR000218">
    <property type="entry name" value="Ribosomal_uL14"/>
</dbReference>
<dbReference type="InterPro" id="IPR005745">
    <property type="entry name" value="Ribosomal_uL14_bac-type"/>
</dbReference>
<dbReference type="InterPro" id="IPR019972">
    <property type="entry name" value="Ribosomal_uL14_CS"/>
</dbReference>
<dbReference type="InterPro" id="IPR036853">
    <property type="entry name" value="Ribosomal_uL14_sf"/>
</dbReference>
<dbReference type="NCBIfam" id="TIGR01067">
    <property type="entry name" value="rplN_bact"/>
    <property type="match status" value="1"/>
</dbReference>
<dbReference type="PANTHER" id="PTHR11761">
    <property type="entry name" value="50S/60S RIBOSOMAL PROTEIN L14/L23"/>
    <property type="match status" value="1"/>
</dbReference>
<dbReference type="PANTHER" id="PTHR11761:SF3">
    <property type="entry name" value="LARGE RIBOSOMAL SUBUNIT PROTEIN UL14M"/>
    <property type="match status" value="1"/>
</dbReference>
<dbReference type="Pfam" id="PF00238">
    <property type="entry name" value="Ribosomal_L14"/>
    <property type="match status" value="1"/>
</dbReference>
<dbReference type="SMART" id="SM01374">
    <property type="entry name" value="Ribosomal_L14"/>
    <property type="match status" value="1"/>
</dbReference>
<dbReference type="SUPFAM" id="SSF50193">
    <property type="entry name" value="Ribosomal protein L14"/>
    <property type="match status" value="1"/>
</dbReference>
<dbReference type="PROSITE" id="PS00049">
    <property type="entry name" value="RIBOSOMAL_L14"/>
    <property type="match status" value="1"/>
</dbReference>
<accession>A8G1D8</accession>
<comment type="function">
    <text evidence="1">Binds to 23S rRNA. Forms part of two intersubunit bridges in the 70S ribosome.</text>
</comment>
<comment type="subunit">
    <text evidence="1">Part of the 50S ribosomal subunit. Forms a cluster with proteins L3 and L19. In the 70S ribosome, L14 and L19 interact and together make contacts with the 16S rRNA in bridges B5 and B8.</text>
</comment>
<comment type="similarity">
    <text evidence="1">Belongs to the universal ribosomal protein uL14 family.</text>
</comment>
<sequence>MIQMQSTLDVACNSGARRVQCIKVLGGSHRRYAGIGDIIKVSVKEAIPRGKAKKGDVYSAVVVRTKKGVRRPDGSVIRFDRNAAVLLNANNAPIGTRIFGPVTRELRNEQFMKIVSLAPEVL</sequence>
<keyword id="KW-1185">Reference proteome</keyword>
<keyword id="KW-0687">Ribonucleoprotein</keyword>
<keyword id="KW-0689">Ribosomal protein</keyword>
<keyword id="KW-0694">RNA-binding</keyword>
<keyword id="KW-0699">rRNA-binding</keyword>
<evidence type="ECO:0000255" key="1">
    <source>
        <dbReference type="HAMAP-Rule" id="MF_01367"/>
    </source>
</evidence>
<evidence type="ECO:0000305" key="2"/>
<organism>
    <name type="scientific">Shewanella sediminis (strain HAW-EB3)</name>
    <dbReference type="NCBI Taxonomy" id="425104"/>
    <lineage>
        <taxon>Bacteria</taxon>
        <taxon>Pseudomonadati</taxon>
        <taxon>Pseudomonadota</taxon>
        <taxon>Gammaproteobacteria</taxon>
        <taxon>Alteromonadales</taxon>
        <taxon>Shewanellaceae</taxon>
        <taxon>Shewanella</taxon>
    </lineage>
</organism>